<reference key="1">
    <citation type="journal article" date="2005" name="Nat. Biotechnol.">
        <title>The complete genome sequence of the meat-borne lactic acid bacterium Lactobacillus sakei 23K.</title>
        <authorList>
            <person name="Chaillou S."/>
            <person name="Champomier-Verges M.-C."/>
            <person name="Cornet M."/>
            <person name="Crutz-Le Coq A.-M."/>
            <person name="Dudez A.-M."/>
            <person name="Martin V."/>
            <person name="Beaufils S."/>
            <person name="Darbon-Rongere E."/>
            <person name="Bossy R."/>
            <person name="Loux V."/>
            <person name="Zagorec M."/>
        </authorList>
    </citation>
    <scope>NUCLEOTIDE SEQUENCE [LARGE SCALE GENOMIC DNA]</scope>
    <source>
        <strain>23K</strain>
    </source>
</reference>
<comment type="function">
    <text evidence="1">Transport of potassium into the cell. Likely operates as a K(+):H(+) symporter.</text>
</comment>
<comment type="catalytic activity">
    <reaction evidence="1">
        <text>K(+)(in) + H(+)(in) = K(+)(out) + H(+)(out)</text>
        <dbReference type="Rhea" id="RHEA:28490"/>
        <dbReference type="ChEBI" id="CHEBI:15378"/>
        <dbReference type="ChEBI" id="CHEBI:29103"/>
    </reaction>
    <physiologicalReaction direction="right-to-left" evidence="1">
        <dbReference type="Rhea" id="RHEA:28492"/>
    </physiologicalReaction>
</comment>
<comment type="subcellular location">
    <subcellularLocation>
        <location evidence="1">Cell membrane</location>
        <topology evidence="1">Multi-pass membrane protein</topology>
    </subcellularLocation>
</comment>
<comment type="similarity">
    <text evidence="1">Belongs to the HAK/KUP transporter (TC 2.A.72) family.</text>
</comment>
<protein>
    <recommendedName>
        <fullName evidence="1">Probable potassium transport system protein Kup</fullName>
    </recommendedName>
</protein>
<keyword id="KW-1003">Cell membrane</keyword>
<keyword id="KW-0406">Ion transport</keyword>
<keyword id="KW-0472">Membrane</keyword>
<keyword id="KW-0630">Potassium</keyword>
<keyword id="KW-0633">Potassium transport</keyword>
<keyword id="KW-1185">Reference proteome</keyword>
<keyword id="KW-0769">Symport</keyword>
<keyword id="KW-0812">Transmembrane</keyword>
<keyword id="KW-1133">Transmembrane helix</keyword>
<keyword id="KW-0813">Transport</keyword>
<evidence type="ECO:0000255" key="1">
    <source>
        <dbReference type="HAMAP-Rule" id="MF_01522"/>
    </source>
</evidence>
<gene>
    <name evidence="1" type="primary">kup</name>
    <name type="ordered locus">LCA_1166</name>
</gene>
<dbReference type="EMBL" id="CR936503">
    <property type="protein sequence ID" value="CAI55468.1"/>
    <property type="molecule type" value="Genomic_DNA"/>
</dbReference>
<dbReference type="RefSeq" id="WP_011374864.1">
    <property type="nucleotide sequence ID" value="NC_007576.1"/>
</dbReference>
<dbReference type="STRING" id="314315.LCA_1166"/>
<dbReference type="KEGG" id="lsa:LCA_1166"/>
<dbReference type="eggNOG" id="COG3158">
    <property type="taxonomic scope" value="Bacteria"/>
</dbReference>
<dbReference type="HOGENOM" id="CLU_008142_4_1_9"/>
<dbReference type="OrthoDB" id="9805577at2"/>
<dbReference type="Proteomes" id="UP000002707">
    <property type="component" value="Chromosome"/>
</dbReference>
<dbReference type="GO" id="GO:0005886">
    <property type="term" value="C:plasma membrane"/>
    <property type="evidence" value="ECO:0007669"/>
    <property type="project" value="UniProtKB-SubCell"/>
</dbReference>
<dbReference type="GO" id="GO:0015079">
    <property type="term" value="F:potassium ion transmembrane transporter activity"/>
    <property type="evidence" value="ECO:0007669"/>
    <property type="project" value="UniProtKB-UniRule"/>
</dbReference>
<dbReference type="GO" id="GO:0015293">
    <property type="term" value="F:symporter activity"/>
    <property type="evidence" value="ECO:0007669"/>
    <property type="project" value="UniProtKB-UniRule"/>
</dbReference>
<dbReference type="HAMAP" id="MF_01522">
    <property type="entry name" value="Kup"/>
    <property type="match status" value="1"/>
</dbReference>
<dbReference type="InterPro" id="IPR003855">
    <property type="entry name" value="K+_transporter"/>
</dbReference>
<dbReference type="InterPro" id="IPR053952">
    <property type="entry name" value="K_trans_C"/>
</dbReference>
<dbReference type="InterPro" id="IPR053951">
    <property type="entry name" value="K_trans_N"/>
</dbReference>
<dbReference type="InterPro" id="IPR023051">
    <property type="entry name" value="Kup"/>
</dbReference>
<dbReference type="PANTHER" id="PTHR30540:SF83">
    <property type="entry name" value="K+ POTASSIUM TRANSPORTER"/>
    <property type="match status" value="1"/>
</dbReference>
<dbReference type="PANTHER" id="PTHR30540">
    <property type="entry name" value="OSMOTIC STRESS POTASSIUM TRANSPORTER"/>
    <property type="match status" value="1"/>
</dbReference>
<dbReference type="Pfam" id="PF02705">
    <property type="entry name" value="K_trans"/>
    <property type="match status" value="1"/>
</dbReference>
<dbReference type="Pfam" id="PF22776">
    <property type="entry name" value="K_trans_C"/>
    <property type="match status" value="1"/>
</dbReference>
<feature type="chain" id="PRO_0000279794" description="Probable potassium transport system protein Kup">
    <location>
        <begin position="1"/>
        <end position="680"/>
    </location>
</feature>
<feature type="transmembrane region" description="Helical" evidence="1">
    <location>
        <begin position="16"/>
        <end position="36"/>
    </location>
</feature>
<feature type="transmembrane region" description="Helical" evidence="1">
    <location>
        <begin position="60"/>
        <end position="80"/>
    </location>
</feature>
<feature type="transmembrane region" description="Helical" evidence="1">
    <location>
        <begin position="103"/>
        <end position="123"/>
    </location>
</feature>
<feature type="transmembrane region" description="Helical" evidence="1">
    <location>
        <begin position="150"/>
        <end position="170"/>
    </location>
</feature>
<feature type="transmembrane region" description="Helical" evidence="1">
    <location>
        <begin position="177"/>
        <end position="197"/>
    </location>
</feature>
<feature type="transmembrane region" description="Helical" evidence="1">
    <location>
        <begin position="222"/>
        <end position="242"/>
    </location>
</feature>
<feature type="transmembrane region" description="Helical" evidence="1">
    <location>
        <begin position="255"/>
        <end position="275"/>
    </location>
</feature>
<feature type="transmembrane region" description="Helical" evidence="1">
    <location>
        <begin position="302"/>
        <end position="322"/>
    </location>
</feature>
<feature type="transmembrane region" description="Helical" evidence="1">
    <location>
        <begin position="351"/>
        <end position="371"/>
    </location>
</feature>
<feature type="transmembrane region" description="Helical" evidence="1">
    <location>
        <begin position="380"/>
        <end position="400"/>
    </location>
</feature>
<feature type="transmembrane region" description="Helical" evidence="1">
    <location>
        <begin position="407"/>
        <end position="427"/>
    </location>
</feature>
<feature type="transmembrane region" description="Helical" evidence="1">
    <location>
        <begin position="432"/>
        <end position="452"/>
    </location>
</feature>
<sequence>MKLATEKKTTRQKLSIAGMLITMGVVYGDIGTSPLYVMKSIVEGNGGIRNISQDFVVGSISLVFWTLMLMTTVKYVLIALRADNNGEGGIFALYTLIRKQAKWLVIPAIIGGATLLADGMLTPAVTVTTAIEGLKGLPINGNVLVSNQREVIILTVTILSVLFFIQKFGTDLIGKSFGPIMLIWFTFIGAIGVMNLMGDLTMLKALNPYYAIHLLFSPENKVGILILGSVFLATTGAEALYSDMGHVGRHNIYGSWPYIAACLVLNYFGQGVWLLQHKEVAAYQNMTDFNPFFEAMPAQLKIPAILLATVAAIIASQALISGSYTLVSEAIKLRLLPRIKVDYPAKLKGQLYISIVNWILWAVCLAVVFYFKNSAHMEAAYGLAITITMLMTTILLFHYLGRREKRWFLAYVVLLFFGAIETIFFIASAAKFMHGGYVTVLIAFVILFIMFVWYRSNSIKESNTFKSSTVSLLAYKRQLHDLRNETSLPLYTTNLVYLSKPQAEPRGKNMVKKNILYSILDKRPKRAQVYWFVAVNVTDEPYTAEYTVDTLGTDYIVSVQLYLGFKMEQKVNIFIRQIIHEMIHNGELPAQPQHYTTIPNREVGDFSFVIIQEDLSPETQIRAMDKVIVQIRLWLEKFTDTPASWFGLEYSDVFVERIPLVLGRQKAINKYHLKRRQEES</sequence>
<name>KUP_LATSS</name>
<organism>
    <name type="scientific">Latilactobacillus sakei subsp. sakei (strain 23K)</name>
    <name type="common">Lactobacillus sakei subsp. sakei</name>
    <dbReference type="NCBI Taxonomy" id="314315"/>
    <lineage>
        <taxon>Bacteria</taxon>
        <taxon>Bacillati</taxon>
        <taxon>Bacillota</taxon>
        <taxon>Bacilli</taxon>
        <taxon>Lactobacillales</taxon>
        <taxon>Lactobacillaceae</taxon>
        <taxon>Latilactobacillus</taxon>
    </lineage>
</organism>
<accession>Q38WG4</accession>
<proteinExistence type="inferred from homology"/>